<proteinExistence type="inferred from homology"/>
<keyword id="KW-0010">Activator</keyword>
<keyword id="KW-0963">Cytoplasm</keyword>
<keyword id="KW-0238">DNA-binding</keyword>
<keyword id="KW-0597">Phosphoprotein</keyword>
<keyword id="KW-1185">Reference proteome</keyword>
<keyword id="KW-0678">Repressor</keyword>
<keyword id="KW-0804">Transcription</keyword>
<keyword id="KW-0805">Transcription regulation</keyword>
<keyword id="KW-0902">Two-component regulatory system</keyword>
<organism>
    <name type="scientific">Escherichia coli O157:H7</name>
    <dbReference type="NCBI Taxonomy" id="83334"/>
    <lineage>
        <taxon>Bacteria</taxon>
        <taxon>Pseudomonadati</taxon>
        <taxon>Pseudomonadota</taxon>
        <taxon>Gammaproteobacteria</taxon>
        <taxon>Enterobacterales</taxon>
        <taxon>Enterobacteriaceae</taxon>
        <taxon>Escherichia</taxon>
    </lineage>
</organism>
<accession>P0A9Q3</accession>
<accession>P03026</accession>
<evidence type="ECO:0000250" key="1"/>
<evidence type="ECO:0000255" key="2">
    <source>
        <dbReference type="PROSITE-ProRule" id="PRU00169"/>
    </source>
</evidence>
<evidence type="ECO:0000255" key="3">
    <source>
        <dbReference type="PROSITE-ProRule" id="PRU01091"/>
    </source>
</evidence>
<reference key="1">
    <citation type="journal article" date="2001" name="Nature">
        <title>Genome sequence of enterohaemorrhagic Escherichia coli O157:H7.</title>
        <authorList>
            <person name="Perna N.T."/>
            <person name="Plunkett G. III"/>
            <person name="Burland V."/>
            <person name="Mau B."/>
            <person name="Glasner J.D."/>
            <person name="Rose D.J."/>
            <person name="Mayhew G.F."/>
            <person name="Evans P.S."/>
            <person name="Gregor J."/>
            <person name="Kirkpatrick H.A."/>
            <person name="Posfai G."/>
            <person name="Hackett J."/>
            <person name="Klink S."/>
            <person name="Boutin A."/>
            <person name="Shao Y."/>
            <person name="Miller L."/>
            <person name="Grotbeck E.J."/>
            <person name="Davis N.W."/>
            <person name="Lim A."/>
            <person name="Dimalanta E.T."/>
            <person name="Potamousis K."/>
            <person name="Apodaca J."/>
            <person name="Anantharaman T.S."/>
            <person name="Lin J."/>
            <person name="Yen G."/>
            <person name="Schwartz D.C."/>
            <person name="Welch R.A."/>
            <person name="Blattner F.R."/>
        </authorList>
    </citation>
    <scope>NUCLEOTIDE SEQUENCE [LARGE SCALE GENOMIC DNA]</scope>
    <source>
        <strain>O157:H7 / EDL933 / ATCC 700927 / EHEC</strain>
    </source>
</reference>
<reference key="2">
    <citation type="journal article" date="2001" name="DNA Res.">
        <title>Complete genome sequence of enterohemorrhagic Escherichia coli O157:H7 and genomic comparison with a laboratory strain K-12.</title>
        <authorList>
            <person name="Hayashi T."/>
            <person name="Makino K."/>
            <person name="Ohnishi M."/>
            <person name="Kurokawa K."/>
            <person name="Ishii K."/>
            <person name="Yokoyama K."/>
            <person name="Han C.-G."/>
            <person name="Ohtsubo E."/>
            <person name="Nakayama K."/>
            <person name="Murata T."/>
            <person name="Tanaka M."/>
            <person name="Tobe T."/>
            <person name="Iida T."/>
            <person name="Takami H."/>
            <person name="Honda T."/>
            <person name="Sasakawa C."/>
            <person name="Ogasawara N."/>
            <person name="Yasunaga T."/>
            <person name="Kuhara S."/>
            <person name="Shiba T."/>
            <person name="Hattori M."/>
            <person name="Shinagawa H."/>
        </authorList>
    </citation>
    <scope>NUCLEOTIDE SEQUENCE [LARGE SCALE GENOMIC DNA]</scope>
    <source>
        <strain>O157:H7 / Sakai / RIMD 0509952 / EHEC</strain>
    </source>
</reference>
<comment type="function">
    <text evidence="1">Member of the two-component regulatory system ArcB/ArcA. Represses a wide variety of aerobic enzymes under anaerobic conditions. It may also be involved in the osmoregulation of envelope proteins. When activated by ArcB, it negatively regulates the expression of genes of aerobic function. Activates the transcription of the plfB operon by binding to its promoter (By similarity).</text>
</comment>
<comment type="subcellular location">
    <subcellularLocation>
        <location evidence="1">Cytoplasm</location>
    </subcellularLocation>
</comment>
<comment type="PTM">
    <text evidence="1">Phosphorylated by ArcB.</text>
</comment>
<gene>
    <name type="primary">arcA</name>
    <name type="ordered locus">Z6004</name>
    <name type="ordered locus">ECs5359</name>
</gene>
<dbReference type="EMBL" id="AE005174">
    <property type="protein sequence ID" value="AAG59581.1"/>
    <property type="molecule type" value="Genomic_DNA"/>
</dbReference>
<dbReference type="EMBL" id="BA000007">
    <property type="protein sequence ID" value="BAB38782.1"/>
    <property type="molecule type" value="Genomic_DNA"/>
</dbReference>
<dbReference type="PIR" id="A86140">
    <property type="entry name" value="A86140"/>
</dbReference>
<dbReference type="PIR" id="G91298">
    <property type="entry name" value="G91298"/>
</dbReference>
<dbReference type="RefSeq" id="NP_313386.1">
    <property type="nucleotide sequence ID" value="NC_002695.1"/>
</dbReference>
<dbReference type="RefSeq" id="WP_001194358.1">
    <property type="nucleotide sequence ID" value="NZ_VOAI01000002.1"/>
</dbReference>
<dbReference type="SMR" id="P0A9Q3"/>
<dbReference type="STRING" id="155864.Z6004"/>
<dbReference type="GeneID" id="913476"/>
<dbReference type="GeneID" id="93777444"/>
<dbReference type="KEGG" id="ece:Z6004"/>
<dbReference type="KEGG" id="ecs:ECs_5359"/>
<dbReference type="PATRIC" id="fig|386585.9.peg.5607"/>
<dbReference type="eggNOG" id="COG0745">
    <property type="taxonomic scope" value="Bacteria"/>
</dbReference>
<dbReference type="HOGENOM" id="CLU_000445_30_4_6"/>
<dbReference type="OMA" id="ADDWMTK"/>
<dbReference type="Proteomes" id="UP000000558">
    <property type="component" value="Chromosome"/>
</dbReference>
<dbReference type="Proteomes" id="UP000002519">
    <property type="component" value="Chromosome"/>
</dbReference>
<dbReference type="GO" id="GO:0005829">
    <property type="term" value="C:cytosol"/>
    <property type="evidence" value="ECO:0007669"/>
    <property type="project" value="TreeGrafter"/>
</dbReference>
<dbReference type="GO" id="GO:0032993">
    <property type="term" value="C:protein-DNA complex"/>
    <property type="evidence" value="ECO:0007669"/>
    <property type="project" value="TreeGrafter"/>
</dbReference>
<dbReference type="GO" id="GO:0000156">
    <property type="term" value="F:phosphorelay response regulator activity"/>
    <property type="evidence" value="ECO:0007669"/>
    <property type="project" value="TreeGrafter"/>
</dbReference>
<dbReference type="GO" id="GO:0000976">
    <property type="term" value="F:transcription cis-regulatory region binding"/>
    <property type="evidence" value="ECO:0007669"/>
    <property type="project" value="TreeGrafter"/>
</dbReference>
<dbReference type="GO" id="GO:0006355">
    <property type="term" value="P:regulation of DNA-templated transcription"/>
    <property type="evidence" value="ECO:0007669"/>
    <property type="project" value="InterPro"/>
</dbReference>
<dbReference type="CDD" id="cd17619">
    <property type="entry name" value="REC_OmpR_ArcA_TorR-like"/>
    <property type="match status" value="1"/>
</dbReference>
<dbReference type="CDD" id="cd00383">
    <property type="entry name" value="trans_reg_C"/>
    <property type="match status" value="1"/>
</dbReference>
<dbReference type="FunFam" id="1.10.10.10:FF:000054">
    <property type="entry name" value="Two-component system response regulator ArcA"/>
    <property type="match status" value="1"/>
</dbReference>
<dbReference type="FunFam" id="3.40.50.2300:FF:000006">
    <property type="entry name" value="Two-component system response regulator ArcA"/>
    <property type="match status" value="1"/>
</dbReference>
<dbReference type="Gene3D" id="3.40.50.2300">
    <property type="match status" value="1"/>
</dbReference>
<dbReference type="Gene3D" id="6.10.250.690">
    <property type="match status" value="1"/>
</dbReference>
<dbReference type="Gene3D" id="1.10.10.10">
    <property type="entry name" value="Winged helix-like DNA-binding domain superfamily/Winged helix DNA-binding domain"/>
    <property type="match status" value="1"/>
</dbReference>
<dbReference type="InterPro" id="IPR011006">
    <property type="entry name" value="CheY-like_superfamily"/>
</dbReference>
<dbReference type="InterPro" id="IPR001867">
    <property type="entry name" value="OmpR/PhoB-type_DNA-bd"/>
</dbReference>
<dbReference type="InterPro" id="IPR016032">
    <property type="entry name" value="Sig_transdc_resp-reg_C-effctor"/>
</dbReference>
<dbReference type="InterPro" id="IPR001789">
    <property type="entry name" value="Sig_transdc_resp-reg_receiver"/>
</dbReference>
<dbReference type="InterPro" id="IPR039420">
    <property type="entry name" value="WalR-like"/>
</dbReference>
<dbReference type="InterPro" id="IPR036388">
    <property type="entry name" value="WH-like_DNA-bd_sf"/>
</dbReference>
<dbReference type="NCBIfam" id="NF008378">
    <property type="entry name" value="PRK11173.1"/>
    <property type="match status" value="1"/>
</dbReference>
<dbReference type="PANTHER" id="PTHR48111:SF55">
    <property type="entry name" value="AEROBIC RESPIRATION CONTROL PROTEIN ARCA"/>
    <property type="match status" value="1"/>
</dbReference>
<dbReference type="PANTHER" id="PTHR48111">
    <property type="entry name" value="REGULATOR OF RPOS"/>
    <property type="match status" value="1"/>
</dbReference>
<dbReference type="Pfam" id="PF00072">
    <property type="entry name" value="Response_reg"/>
    <property type="match status" value="1"/>
</dbReference>
<dbReference type="Pfam" id="PF00486">
    <property type="entry name" value="Trans_reg_C"/>
    <property type="match status" value="1"/>
</dbReference>
<dbReference type="SMART" id="SM00448">
    <property type="entry name" value="REC"/>
    <property type="match status" value="1"/>
</dbReference>
<dbReference type="SMART" id="SM00862">
    <property type="entry name" value="Trans_reg_C"/>
    <property type="match status" value="1"/>
</dbReference>
<dbReference type="SUPFAM" id="SSF46894">
    <property type="entry name" value="C-terminal effector domain of the bipartite response regulators"/>
    <property type="match status" value="1"/>
</dbReference>
<dbReference type="SUPFAM" id="SSF52172">
    <property type="entry name" value="CheY-like"/>
    <property type="match status" value="1"/>
</dbReference>
<dbReference type="PROSITE" id="PS51755">
    <property type="entry name" value="OMPR_PHOB"/>
    <property type="match status" value="1"/>
</dbReference>
<dbReference type="PROSITE" id="PS50110">
    <property type="entry name" value="RESPONSE_REGULATORY"/>
    <property type="match status" value="1"/>
</dbReference>
<feature type="chain" id="PRO_0000081009" description="Aerobic respiration control protein ArcA">
    <location>
        <begin position="1"/>
        <end position="238"/>
    </location>
</feature>
<feature type="domain" description="Response regulatory" evidence="2">
    <location>
        <begin position="5"/>
        <end position="118"/>
    </location>
</feature>
<feature type="DNA-binding region" description="OmpR/PhoB-type" evidence="3">
    <location>
        <begin position="134"/>
        <end position="234"/>
    </location>
</feature>
<feature type="modified residue" description="4-aspartylphosphate" evidence="2">
    <location>
        <position position="54"/>
    </location>
</feature>
<protein>
    <recommendedName>
        <fullName>Aerobic respiration control protein ArcA</fullName>
    </recommendedName>
</protein>
<sequence>MQTPHILIVEDELVTRNTLKSIFEAEGYDVFEATDGAEMHQILSEYDINLVIMDINLPGKNGLLLARELREQANVALMFLTGRDNEVDKILGLEIGADDYITKPFNPRELTIRARNLLSRTMNLGTVSEERRSVESYKFNGWELDINSRSLIGPDGEQYKLPRSEFRAMLHFCENPGKIQSRAELLKKMTGRELKPHDRTVDVTIRRIRKHFESTPDTPEIIATIHGEGYRFCGDLED</sequence>
<name>ARCA_ECO57</name>